<protein>
    <recommendedName>
        <fullName evidence="1">Thymidylate kinase</fullName>
        <ecNumber evidence="1">2.7.4.9</ecNumber>
    </recommendedName>
    <alternativeName>
        <fullName evidence="1">dTMP kinase</fullName>
    </alternativeName>
</protein>
<dbReference type="EC" id="2.7.4.9" evidence="1"/>
<dbReference type="EMBL" id="CU928145">
    <property type="protein sequence ID" value="CAU97069.1"/>
    <property type="molecule type" value="Genomic_DNA"/>
</dbReference>
<dbReference type="RefSeq" id="WP_001257000.1">
    <property type="nucleotide sequence ID" value="NC_011748.1"/>
</dbReference>
<dbReference type="SMR" id="B7LG31"/>
<dbReference type="GeneID" id="93776310"/>
<dbReference type="KEGG" id="eck:EC55989_1210"/>
<dbReference type="HOGENOM" id="CLU_049131_0_1_6"/>
<dbReference type="Proteomes" id="UP000000746">
    <property type="component" value="Chromosome"/>
</dbReference>
<dbReference type="GO" id="GO:0005829">
    <property type="term" value="C:cytosol"/>
    <property type="evidence" value="ECO:0007669"/>
    <property type="project" value="TreeGrafter"/>
</dbReference>
<dbReference type="GO" id="GO:0005524">
    <property type="term" value="F:ATP binding"/>
    <property type="evidence" value="ECO:0007669"/>
    <property type="project" value="UniProtKB-UniRule"/>
</dbReference>
<dbReference type="GO" id="GO:0004798">
    <property type="term" value="F:dTMP kinase activity"/>
    <property type="evidence" value="ECO:0007669"/>
    <property type="project" value="UniProtKB-UniRule"/>
</dbReference>
<dbReference type="GO" id="GO:0006233">
    <property type="term" value="P:dTDP biosynthetic process"/>
    <property type="evidence" value="ECO:0007669"/>
    <property type="project" value="InterPro"/>
</dbReference>
<dbReference type="GO" id="GO:0006235">
    <property type="term" value="P:dTTP biosynthetic process"/>
    <property type="evidence" value="ECO:0007669"/>
    <property type="project" value="UniProtKB-UniRule"/>
</dbReference>
<dbReference type="GO" id="GO:0006227">
    <property type="term" value="P:dUDP biosynthetic process"/>
    <property type="evidence" value="ECO:0007669"/>
    <property type="project" value="TreeGrafter"/>
</dbReference>
<dbReference type="CDD" id="cd01672">
    <property type="entry name" value="TMPK"/>
    <property type="match status" value="1"/>
</dbReference>
<dbReference type="FunFam" id="3.40.50.300:FF:000321">
    <property type="entry name" value="Thymidylate kinase"/>
    <property type="match status" value="1"/>
</dbReference>
<dbReference type="Gene3D" id="3.40.50.300">
    <property type="entry name" value="P-loop containing nucleotide triphosphate hydrolases"/>
    <property type="match status" value="1"/>
</dbReference>
<dbReference type="HAMAP" id="MF_00165">
    <property type="entry name" value="Thymidylate_kinase"/>
    <property type="match status" value="1"/>
</dbReference>
<dbReference type="InterPro" id="IPR027417">
    <property type="entry name" value="P-loop_NTPase"/>
</dbReference>
<dbReference type="InterPro" id="IPR039430">
    <property type="entry name" value="Thymidylate_kin-like_dom"/>
</dbReference>
<dbReference type="InterPro" id="IPR018095">
    <property type="entry name" value="Thymidylate_kin_CS"/>
</dbReference>
<dbReference type="InterPro" id="IPR018094">
    <property type="entry name" value="Thymidylate_kinase"/>
</dbReference>
<dbReference type="NCBIfam" id="TIGR00041">
    <property type="entry name" value="DTMP_kinase"/>
    <property type="match status" value="1"/>
</dbReference>
<dbReference type="PANTHER" id="PTHR10344">
    <property type="entry name" value="THYMIDYLATE KINASE"/>
    <property type="match status" value="1"/>
</dbReference>
<dbReference type="PANTHER" id="PTHR10344:SF4">
    <property type="entry name" value="UMP-CMP KINASE 2, MITOCHONDRIAL"/>
    <property type="match status" value="1"/>
</dbReference>
<dbReference type="Pfam" id="PF02223">
    <property type="entry name" value="Thymidylate_kin"/>
    <property type="match status" value="1"/>
</dbReference>
<dbReference type="SUPFAM" id="SSF52540">
    <property type="entry name" value="P-loop containing nucleoside triphosphate hydrolases"/>
    <property type="match status" value="1"/>
</dbReference>
<dbReference type="PROSITE" id="PS01331">
    <property type="entry name" value="THYMIDYLATE_KINASE"/>
    <property type="match status" value="1"/>
</dbReference>
<proteinExistence type="inferred from homology"/>
<accession>B7LG31</accession>
<name>KTHY_ECO55</name>
<keyword id="KW-0067">ATP-binding</keyword>
<keyword id="KW-0418">Kinase</keyword>
<keyword id="KW-0545">Nucleotide biosynthesis</keyword>
<keyword id="KW-0547">Nucleotide-binding</keyword>
<keyword id="KW-1185">Reference proteome</keyword>
<keyword id="KW-0808">Transferase</keyword>
<organism>
    <name type="scientific">Escherichia coli (strain 55989 / EAEC)</name>
    <dbReference type="NCBI Taxonomy" id="585055"/>
    <lineage>
        <taxon>Bacteria</taxon>
        <taxon>Pseudomonadati</taxon>
        <taxon>Pseudomonadota</taxon>
        <taxon>Gammaproteobacteria</taxon>
        <taxon>Enterobacterales</taxon>
        <taxon>Enterobacteriaceae</taxon>
        <taxon>Escherichia</taxon>
    </lineage>
</organism>
<comment type="function">
    <text evidence="1">Phosphorylation of dTMP to form dTDP in both de novo and salvage pathways of dTTP synthesis.</text>
</comment>
<comment type="catalytic activity">
    <reaction evidence="1">
        <text>dTMP + ATP = dTDP + ADP</text>
        <dbReference type="Rhea" id="RHEA:13517"/>
        <dbReference type="ChEBI" id="CHEBI:30616"/>
        <dbReference type="ChEBI" id="CHEBI:58369"/>
        <dbReference type="ChEBI" id="CHEBI:63528"/>
        <dbReference type="ChEBI" id="CHEBI:456216"/>
        <dbReference type="EC" id="2.7.4.9"/>
    </reaction>
</comment>
<comment type="similarity">
    <text evidence="1">Belongs to the thymidylate kinase family.</text>
</comment>
<reference key="1">
    <citation type="journal article" date="2009" name="PLoS Genet.">
        <title>Organised genome dynamics in the Escherichia coli species results in highly diverse adaptive paths.</title>
        <authorList>
            <person name="Touchon M."/>
            <person name="Hoede C."/>
            <person name="Tenaillon O."/>
            <person name="Barbe V."/>
            <person name="Baeriswyl S."/>
            <person name="Bidet P."/>
            <person name="Bingen E."/>
            <person name="Bonacorsi S."/>
            <person name="Bouchier C."/>
            <person name="Bouvet O."/>
            <person name="Calteau A."/>
            <person name="Chiapello H."/>
            <person name="Clermont O."/>
            <person name="Cruveiller S."/>
            <person name="Danchin A."/>
            <person name="Diard M."/>
            <person name="Dossat C."/>
            <person name="Karoui M.E."/>
            <person name="Frapy E."/>
            <person name="Garry L."/>
            <person name="Ghigo J.M."/>
            <person name="Gilles A.M."/>
            <person name="Johnson J."/>
            <person name="Le Bouguenec C."/>
            <person name="Lescat M."/>
            <person name="Mangenot S."/>
            <person name="Martinez-Jehanne V."/>
            <person name="Matic I."/>
            <person name="Nassif X."/>
            <person name="Oztas S."/>
            <person name="Petit M.A."/>
            <person name="Pichon C."/>
            <person name="Rouy Z."/>
            <person name="Ruf C.S."/>
            <person name="Schneider D."/>
            <person name="Tourret J."/>
            <person name="Vacherie B."/>
            <person name="Vallenet D."/>
            <person name="Medigue C."/>
            <person name="Rocha E.P.C."/>
            <person name="Denamur E."/>
        </authorList>
    </citation>
    <scope>NUCLEOTIDE SEQUENCE [LARGE SCALE GENOMIC DNA]</scope>
    <source>
        <strain>55989 / EAEC</strain>
    </source>
</reference>
<feature type="chain" id="PRO_1000123571" description="Thymidylate kinase">
    <location>
        <begin position="1"/>
        <end position="213"/>
    </location>
</feature>
<feature type="binding site" evidence="1">
    <location>
        <begin position="10"/>
        <end position="17"/>
    </location>
    <ligand>
        <name>ATP</name>
        <dbReference type="ChEBI" id="CHEBI:30616"/>
    </ligand>
</feature>
<evidence type="ECO:0000255" key="1">
    <source>
        <dbReference type="HAMAP-Rule" id="MF_00165"/>
    </source>
</evidence>
<sequence>MRSKYIVIEGLEGAGKTTARNVVVETLEQLGIRDMVFTREPGGTQLAEKLRSLVLDIKSVGDEVITDKAEVLMFYAARVQLVETVIKPALANGTWVIGDRHDLSTQAYQGGGRGIDQHMLATLRDAVLGDFRPDLTLYLDVTPEVGLKRARARGELDRIEQESFDFFNRTRARYLELAAQDKSIHTIDATQPLEAVMDAIRTTVTHWVKELDA</sequence>
<gene>
    <name evidence="1" type="primary">tmk</name>
    <name type="ordered locus">EC55989_1210</name>
</gene>